<keyword id="KW-0488">Methylation</keyword>
<keyword id="KW-0687">Ribonucleoprotein</keyword>
<keyword id="KW-0689">Ribosomal protein</keyword>
<keyword id="KW-0694">RNA-binding</keyword>
<keyword id="KW-0699">rRNA-binding</keyword>
<keyword id="KW-0820">tRNA-binding</keyword>
<evidence type="ECO:0000250" key="1"/>
<evidence type="ECO:0000255" key="2">
    <source>
        <dbReference type="HAMAP-Rule" id="MF_00403"/>
    </source>
</evidence>
<evidence type="ECO:0000256" key="3">
    <source>
        <dbReference type="SAM" id="MobiDB-lite"/>
    </source>
</evidence>
<evidence type="ECO:0000305" key="4"/>
<feature type="chain" id="PRO_1000134657" description="Small ribosomal subunit protein uS12">
    <location>
        <begin position="1"/>
        <end position="137"/>
    </location>
</feature>
<feature type="region of interest" description="Disordered" evidence="3">
    <location>
        <begin position="1"/>
        <end position="21"/>
    </location>
</feature>
<feature type="region of interest" description="Disordered" evidence="3">
    <location>
        <begin position="33"/>
        <end position="57"/>
    </location>
</feature>
<feature type="modified residue" description="3-methylthioaspartic acid" evidence="1">
    <location>
        <position position="102"/>
    </location>
</feature>
<dbReference type="EMBL" id="FM211187">
    <property type="protein sequence ID" value="CAR68117.1"/>
    <property type="molecule type" value="Genomic_DNA"/>
</dbReference>
<dbReference type="RefSeq" id="WP_001142334.1">
    <property type="nucleotide sequence ID" value="NC_011900.1"/>
</dbReference>
<dbReference type="SMR" id="B8ZKT8"/>
<dbReference type="KEGG" id="sne:SPN23F02570"/>
<dbReference type="HOGENOM" id="CLU_104295_1_2_9"/>
<dbReference type="GO" id="GO:0015935">
    <property type="term" value="C:small ribosomal subunit"/>
    <property type="evidence" value="ECO:0007669"/>
    <property type="project" value="InterPro"/>
</dbReference>
<dbReference type="GO" id="GO:0019843">
    <property type="term" value="F:rRNA binding"/>
    <property type="evidence" value="ECO:0007669"/>
    <property type="project" value="UniProtKB-UniRule"/>
</dbReference>
<dbReference type="GO" id="GO:0003735">
    <property type="term" value="F:structural constituent of ribosome"/>
    <property type="evidence" value="ECO:0007669"/>
    <property type="project" value="InterPro"/>
</dbReference>
<dbReference type="GO" id="GO:0000049">
    <property type="term" value="F:tRNA binding"/>
    <property type="evidence" value="ECO:0007669"/>
    <property type="project" value="UniProtKB-UniRule"/>
</dbReference>
<dbReference type="GO" id="GO:0006412">
    <property type="term" value="P:translation"/>
    <property type="evidence" value="ECO:0007669"/>
    <property type="project" value="UniProtKB-UniRule"/>
</dbReference>
<dbReference type="CDD" id="cd03368">
    <property type="entry name" value="Ribosomal_S12"/>
    <property type="match status" value="1"/>
</dbReference>
<dbReference type="FunFam" id="2.40.50.140:FF:000001">
    <property type="entry name" value="30S ribosomal protein S12"/>
    <property type="match status" value="1"/>
</dbReference>
<dbReference type="Gene3D" id="2.40.50.140">
    <property type="entry name" value="Nucleic acid-binding proteins"/>
    <property type="match status" value="1"/>
</dbReference>
<dbReference type="HAMAP" id="MF_00403_B">
    <property type="entry name" value="Ribosomal_uS12_B"/>
    <property type="match status" value="1"/>
</dbReference>
<dbReference type="InterPro" id="IPR012340">
    <property type="entry name" value="NA-bd_OB-fold"/>
</dbReference>
<dbReference type="InterPro" id="IPR006032">
    <property type="entry name" value="Ribosomal_uS12"/>
</dbReference>
<dbReference type="InterPro" id="IPR005679">
    <property type="entry name" value="Ribosomal_uS12_bac"/>
</dbReference>
<dbReference type="NCBIfam" id="TIGR00981">
    <property type="entry name" value="rpsL_bact"/>
    <property type="match status" value="1"/>
</dbReference>
<dbReference type="PANTHER" id="PTHR11652">
    <property type="entry name" value="30S RIBOSOMAL PROTEIN S12 FAMILY MEMBER"/>
    <property type="match status" value="1"/>
</dbReference>
<dbReference type="Pfam" id="PF00164">
    <property type="entry name" value="Ribosom_S12_S23"/>
    <property type="match status" value="1"/>
</dbReference>
<dbReference type="PIRSF" id="PIRSF002133">
    <property type="entry name" value="Ribosomal_S12/S23"/>
    <property type="match status" value="1"/>
</dbReference>
<dbReference type="PRINTS" id="PR01034">
    <property type="entry name" value="RIBOSOMALS12"/>
</dbReference>
<dbReference type="SUPFAM" id="SSF50249">
    <property type="entry name" value="Nucleic acid-binding proteins"/>
    <property type="match status" value="1"/>
</dbReference>
<dbReference type="PROSITE" id="PS00055">
    <property type="entry name" value="RIBOSOMAL_S12"/>
    <property type="match status" value="1"/>
</dbReference>
<name>RS12_STRPJ</name>
<comment type="function">
    <text evidence="2">With S4 and S5 plays an important role in translational accuracy.</text>
</comment>
<comment type="function">
    <text evidence="2">Interacts with and stabilizes bases of the 16S rRNA that are involved in tRNA selection in the A site and with the mRNA backbone. Located at the interface of the 30S and 50S subunits, it traverses the body of the 30S subunit contacting proteins on the other side and probably holding the rRNA structure together. The combined cluster of proteins S8, S12 and S17 appears to hold together the shoulder and platform of the 30S subunit.</text>
</comment>
<comment type="subunit">
    <text evidence="2">Part of the 30S ribosomal subunit. Contacts proteins S8 and S17. May interact with IF1 in the 30S initiation complex.</text>
</comment>
<comment type="similarity">
    <text evidence="2">Belongs to the universal ribosomal protein uS12 family.</text>
</comment>
<accession>B8ZKT8</accession>
<protein>
    <recommendedName>
        <fullName evidence="2">Small ribosomal subunit protein uS12</fullName>
    </recommendedName>
    <alternativeName>
        <fullName evidence="4">30S ribosomal protein S12</fullName>
    </alternativeName>
</protein>
<gene>
    <name evidence="2" type="primary">rpsL</name>
    <name type="ordered locus">SPN23F02570</name>
</gene>
<reference key="1">
    <citation type="journal article" date="2009" name="J. Bacteriol.">
        <title>Role of conjugative elements in the evolution of the multidrug-resistant pandemic clone Streptococcus pneumoniae Spain23F ST81.</title>
        <authorList>
            <person name="Croucher N.J."/>
            <person name="Walker D."/>
            <person name="Romero P."/>
            <person name="Lennard N."/>
            <person name="Paterson G.K."/>
            <person name="Bason N.C."/>
            <person name="Mitchell A.M."/>
            <person name="Quail M.A."/>
            <person name="Andrew P.W."/>
            <person name="Parkhill J."/>
            <person name="Bentley S.D."/>
            <person name="Mitchell T.J."/>
        </authorList>
    </citation>
    <scope>NUCLEOTIDE SEQUENCE [LARGE SCALE GENOMIC DNA]</scope>
    <source>
        <strain>ATCC 700669 / Spain 23F-1</strain>
    </source>
</reference>
<sequence>MPTINQLVRKPRKSKVEKSKSPALNVGYNSHKKVQTNVSSPQKRGVATRVGTMTPRKPNSALRKFARVRLSNLIEVTAYIPGIGHNLQEHSVVLLRGGHVKDLPGVRYHIVRGALDTAGVNDRKQGRSKYGTKRPKA</sequence>
<organism>
    <name type="scientific">Streptococcus pneumoniae (strain ATCC 700669 / Spain 23F-1)</name>
    <dbReference type="NCBI Taxonomy" id="561276"/>
    <lineage>
        <taxon>Bacteria</taxon>
        <taxon>Bacillati</taxon>
        <taxon>Bacillota</taxon>
        <taxon>Bacilli</taxon>
        <taxon>Lactobacillales</taxon>
        <taxon>Streptococcaceae</taxon>
        <taxon>Streptococcus</taxon>
    </lineage>
</organism>
<proteinExistence type="inferred from homology"/>